<dbReference type="EC" id="4.3.1.18" evidence="2 3"/>
<dbReference type="EMBL" id="X91837">
    <property type="protein sequence ID" value="CAA62948.1"/>
    <property type="status" value="ALT_FRAME"/>
    <property type="molecule type" value="Genomic_DNA"/>
</dbReference>
<dbReference type="EMBL" id="Z72718">
    <property type="protein sequence ID" value="CAA96908.1"/>
    <property type="status" value="ALT_FRAME"/>
    <property type="molecule type" value="Genomic_DNA"/>
</dbReference>
<dbReference type="EMBL" id="AY558389">
    <property type="protein sequence ID" value="AAS56715.1"/>
    <property type="molecule type" value="Genomic_DNA"/>
</dbReference>
<dbReference type="EMBL" id="BK006941">
    <property type="protein sequence ID" value="DAA07918.1"/>
    <property type="molecule type" value="Genomic_DNA"/>
</dbReference>
<dbReference type="PIR" id="S64213">
    <property type="entry name" value="S64213"/>
</dbReference>
<dbReference type="RefSeq" id="NP_011319.2">
    <property type="nucleotide sequence ID" value="NM_001181061.1"/>
</dbReference>
<dbReference type="SMR" id="P53095"/>
<dbReference type="BioGRID" id="33061">
    <property type="interactions" value="98"/>
</dbReference>
<dbReference type="FunCoup" id="P53095">
    <property type="interactions" value="60"/>
</dbReference>
<dbReference type="STRING" id="4932.YGL196W"/>
<dbReference type="iPTMnet" id="P53095"/>
<dbReference type="PaxDb" id="4932-YGL196W"/>
<dbReference type="PeptideAtlas" id="P53095"/>
<dbReference type="EnsemblFungi" id="YGL196W_mRNA">
    <property type="protein sequence ID" value="YGL196W"/>
    <property type="gene ID" value="YGL196W"/>
</dbReference>
<dbReference type="GeneID" id="852679"/>
<dbReference type="KEGG" id="sce:YGL196W"/>
<dbReference type="AGR" id="SGD:S000003164"/>
<dbReference type="SGD" id="S000003164">
    <property type="gene designation" value="DSD1"/>
</dbReference>
<dbReference type="VEuPathDB" id="FungiDB:YGL196W"/>
<dbReference type="eggNOG" id="ENOG502QRZ0">
    <property type="taxonomic scope" value="Eukaryota"/>
</dbReference>
<dbReference type="HOGENOM" id="CLU_031639_0_0_1"/>
<dbReference type="InParanoid" id="P53095"/>
<dbReference type="OMA" id="WPRFYGW"/>
<dbReference type="OrthoDB" id="20198at2759"/>
<dbReference type="BioCyc" id="YEAST:G3O-30677-MONOMER"/>
<dbReference type="BRENDA" id="4.3.1.18">
    <property type="organism ID" value="984"/>
</dbReference>
<dbReference type="SABIO-RK" id="P53095"/>
<dbReference type="BioGRID-ORCS" id="852679">
    <property type="hits" value="0 hits in 10 CRISPR screens"/>
</dbReference>
<dbReference type="PRO" id="PR:P53095"/>
<dbReference type="Proteomes" id="UP000002311">
    <property type="component" value="Chromosome VII"/>
</dbReference>
<dbReference type="RNAct" id="P53095">
    <property type="molecule type" value="protein"/>
</dbReference>
<dbReference type="GO" id="GO:0008721">
    <property type="term" value="F:D-serine ammonia-lyase activity"/>
    <property type="evidence" value="ECO:0000314"/>
    <property type="project" value="SGD"/>
</dbReference>
<dbReference type="GO" id="GO:0046872">
    <property type="term" value="F:metal ion binding"/>
    <property type="evidence" value="ECO:0007669"/>
    <property type="project" value="UniProtKB-KW"/>
</dbReference>
<dbReference type="GO" id="GO:0036088">
    <property type="term" value="P:D-serine catabolic process"/>
    <property type="evidence" value="ECO:0000318"/>
    <property type="project" value="GO_Central"/>
</dbReference>
<dbReference type="GO" id="GO:0070178">
    <property type="term" value="P:D-serine metabolic process"/>
    <property type="evidence" value="ECO:0000315"/>
    <property type="project" value="SGD"/>
</dbReference>
<dbReference type="GO" id="GO:0009636">
    <property type="term" value="P:response to toxic substance"/>
    <property type="evidence" value="ECO:0007669"/>
    <property type="project" value="UniProtKB-KW"/>
</dbReference>
<dbReference type="CDD" id="cd06817">
    <property type="entry name" value="PLPDE_III_DSD"/>
    <property type="match status" value="1"/>
</dbReference>
<dbReference type="FunFam" id="2.40.37.20:FF:000002">
    <property type="entry name" value="D-serine dehydratase"/>
    <property type="match status" value="1"/>
</dbReference>
<dbReference type="FunFam" id="3.20.20.10:FF:000016">
    <property type="entry name" value="D-serine dehydratase"/>
    <property type="match status" value="1"/>
</dbReference>
<dbReference type="Gene3D" id="3.20.20.10">
    <property type="entry name" value="Alanine racemase"/>
    <property type="match status" value="1"/>
</dbReference>
<dbReference type="Gene3D" id="2.40.37.20">
    <property type="entry name" value="D-serine dehydratase-like domain"/>
    <property type="match status" value="1"/>
</dbReference>
<dbReference type="InterPro" id="IPR001608">
    <property type="entry name" value="Ala_racemase_N"/>
</dbReference>
<dbReference type="InterPro" id="IPR051466">
    <property type="entry name" value="D-amino_acid_metab_enzyme"/>
</dbReference>
<dbReference type="InterPro" id="IPR026956">
    <property type="entry name" value="D-ser_dehydrat-like_dom"/>
</dbReference>
<dbReference type="InterPro" id="IPR042208">
    <property type="entry name" value="D-ser_dehydrat-like_sf"/>
</dbReference>
<dbReference type="InterPro" id="IPR029066">
    <property type="entry name" value="PLP-binding_barrel"/>
</dbReference>
<dbReference type="PANTHER" id="PTHR28004:SF2">
    <property type="entry name" value="D-SERINE DEHYDRATASE"/>
    <property type="match status" value="1"/>
</dbReference>
<dbReference type="PANTHER" id="PTHR28004">
    <property type="entry name" value="ZGC:162816-RELATED"/>
    <property type="match status" value="1"/>
</dbReference>
<dbReference type="Pfam" id="PF01168">
    <property type="entry name" value="Ala_racemase_N"/>
    <property type="match status" value="1"/>
</dbReference>
<dbReference type="Pfam" id="PF14031">
    <property type="entry name" value="D-ser_dehydrat"/>
    <property type="match status" value="1"/>
</dbReference>
<dbReference type="SMART" id="SM01119">
    <property type="entry name" value="D-ser_dehydrat"/>
    <property type="match status" value="1"/>
</dbReference>
<dbReference type="SUPFAM" id="SSF51419">
    <property type="entry name" value="PLP-binding barrel"/>
    <property type="match status" value="1"/>
</dbReference>
<name>DSD1_YEAST</name>
<sequence length="428" mass="47828">MSDVLSQYKGCSVRDLPTPNFVINEEKFDKNCTTMLNNVEKLSQECGVPIKFRAHVKTHKTAKGTLKQLGHGLPLAKRTTRAILVSTLKEAEELLNYQDRQCSDYIDDITYSLPCCVPEFIPLLSNLSRRVNNFQVFVDNIEHLENLKNFGRPASGKKWSVFIKVDMGTKRAGLAFDSPEFLSLLKKLTSSEIKEVIEPYGFYAHAGHSYSSTSINDTQNLLMEEVKAVNSAAKVLCSVDPQFDPSKLTLSVGATPTSNSLKLDNKSTLVKFITTQLVSTLEIHCGNYCMYDLQQVATGCVQDHELSGFVLGTVLSSYPSRGELLSNTGVMCLTREASSIKGFGICADLEHVLKSESFSREWYVARVSQEHGILRPIRNWNETTPLKLGSKIAVLPQHACITMGQFPYYFVVNSEGIVNDVWLPFQKW</sequence>
<feature type="chain" id="PRO_0000202722" description="D-serine dehydratase">
    <location>
        <begin position="1"/>
        <end position="428"/>
    </location>
</feature>
<feature type="binding site" evidence="1">
    <location>
        <position position="203"/>
    </location>
    <ligand>
        <name>pyridoxal 5'-phosphate</name>
        <dbReference type="ChEBI" id="CHEBI:597326"/>
    </ligand>
</feature>
<feature type="binding site" evidence="1">
    <location>
        <position position="210"/>
    </location>
    <ligand>
        <name>pyridoxal 5'-phosphate</name>
        <dbReference type="ChEBI" id="CHEBI:597326"/>
    </ligand>
</feature>
<feature type="binding site" evidence="1">
    <location>
        <position position="255"/>
    </location>
    <ligand>
        <name>pyridoxal 5'-phosphate</name>
        <dbReference type="ChEBI" id="CHEBI:597326"/>
    </ligand>
</feature>
<feature type="binding site" evidence="1">
    <location>
        <position position="286"/>
    </location>
    <ligand>
        <name>pyridoxal 5'-phosphate</name>
        <dbReference type="ChEBI" id="CHEBI:597326"/>
    </ligand>
</feature>
<feature type="binding site" evidence="1">
    <location>
        <position position="287"/>
    </location>
    <ligand>
        <name>pyridoxal 5'-phosphate</name>
        <dbReference type="ChEBI" id="CHEBI:597326"/>
    </ligand>
</feature>
<feature type="binding site" evidence="1">
    <location>
        <position position="398"/>
    </location>
    <ligand>
        <name>Zn(2+)</name>
        <dbReference type="ChEBI" id="CHEBI:29105"/>
        <note>catalytic</note>
    </ligand>
</feature>
<feature type="binding site" evidence="1">
    <location>
        <position position="400"/>
    </location>
    <ligand>
        <name>Zn(2+)</name>
        <dbReference type="ChEBI" id="CHEBI:29105"/>
        <note>catalytic</note>
    </ligand>
</feature>
<feature type="modified residue" description="N6-(pyridoxal phosphate)lysine" evidence="1">
    <location>
        <position position="57"/>
    </location>
</feature>
<feature type="sequence conflict" description="In Ref. 1; CAA62948 and 2; CAA96908." evidence="4" ref="1 2">
    <original>S</original>
    <variation>R</variation>
    <location>
        <position position="125"/>
    </location>
</feature>
<gene>
    <name evidence="5" type="primary">DSD1</name>
    <name type="ordered locus">YGL196W</name>
    <name type="ORF">G1315</name>
</gene>
<accession>P53095</accession>
<accession>D6VTV7</accession>
<proteinExistence type="evidence at protein level"/>
<organism>
    <name type="scientific">Saccharomyces cerevisiae (strain ATCC 204508 / S288c)</name>
    <name type="common">Baker's yeast</name>
    <dbReference type="NCBI Taxonomy" id="559292"/>
    <lineage>
        <taxon>Eukaryota</taxon>
        <taxon>Fungi</taxon>
        <taxon>Dikarya</taxon>
        <taxon>Ascomycota</taxon>
        <taxon>Saccharomycotina</taxon>
        <taxon>Saccharomycetes</taxon>
        <taxon>Saccharomycetales</taxon>
        <taxon>Saccharomycetaceae</taxon>
        <taxon>Saccharomyces</taxon>
    </lineage>
</organism>
<comment type="function">
    <text evidence="2 3">Catalyzes the conversion of D-serine to pyruvate and ammonia (PubMed:17869212, PubMed:17937657). May play a role in D-serine detoxification (PubMed:17869212, PubMed:17937657).</text>
</comment>
<comment type="catalytic activity">
    <reaction evidence="2 3">
        <text>D-serine = pyruvate + NH4(+)</text>
        <dbReference type="Rhea" id="RHEA:13977"/>
        <dbReference type="ChEBI" id="CHEBI:15361"/>
        <dbReference type="ChEBI" id="CHEBI:28938"/>
        <dbReference type="ChEBI" id="CHEBI:35247"/>
        <dbReference type="EC" id="4.3.1.18"/>
    </reaction>
    <physiologicalReaction direction="left-to-right" evidence="2 3">
        <dbReference type="Rhea" id="RHEA:13978"/>
    </physiologicalReaction>
</comment>
<comment type="cofactor">
    <cofactor evidence="3">
        <name>pyridoxal 5'-phosphate</name>
        <dbReference type="ChEBI" id="CHEBI:597326"/>
    </cofactor>
</comment>
<comment type="cofactor">
    <cofactor evidence="3">
        <name>Zn(2+)</name>
        <dbReference type="ChEBI" id="CHEBI:29105"/>
    </cofactor>
</comment>
<comment type="activity regulation">
    <text evidence="3">Sodium cyanoborohydride, N-ethylmaleimide, hydroxylamine, phenyhydrazin and EDTA are inhibitors of the catalytic activity.</text>
</comment>
<comment type="biophysicochemical properties">
    <kinetics>
        <KM evidence="3">0.39 mM for D-serine</KM>
        <KM evidence="3">0.13 mM for D-threonine</KM>
        <KM evidence="3">1.45 mM for beta-Cl-D-alanine</KM>
    </kinetics>
    <phDependence>
        <text evidence="3">Optimum pH is 8.0.</text>
    </phDependence>
</comment>
<comment type="subunit">
    <text evidence="3">Homodimer.</text>
</comment>
<comment type="similarity">
    <text evidence="4">Belongs to the DSD1 family.</text>
</comment>
<comment type="sequence caution" evidence="4">
    <conflict type="frameshift">
        <sequence resource="EMBL-CDS" id="CAA62948"/>
    </conflict>
</comment>
<comment type="sequence caution" evidence="4">
    <conflict type="frameshift">
        <sequence resource="EMBL-CDS" id="CAA96908"/>
    </conflict>
</comment>
<keyword id="KW-0216">Detoxification</keyword>
<keyword id="KW-0456">Lyase</keyword>
<keyword id="KW-0479">Metal-binding</keyword>
<keyword id="KW-0663">Pyridoxal phosphate</keyword>
<keyword id="KW-1185">Reference proteome</keyword>
<keyword id="KW-0862">Zinc</keyword>
<protein>
    <recommendedName>
        <fullName>D-serine dehydratase</fullName>
        <ecNumber evidence="2 3">4.3.1.18</ecNumber>
    </recommendedName>
    <alternativeName>
        <fullName>D-serine deaminase</fullName>
        <shortName>DSD</shortName>
    </alternativeName>
</protein>
<evidence type="ECO:0000250" key="1">
    <source>
        <dbReference type="UniProtKB" id="A0A8V1ABE9"/>
    </source>
</evidence>
<evidence type="ECO:0000269" key="2">
    <source>
    </source>
</evidence>
<evidence type="ECO:0000269" key="3">
    <source>
    </source>
</evidence>
<evidence type="ECO:0000305" key="4"/>
<evidence type="ECO:0000312" key="5">
    <source>
        <dbReference type="SGD" id="S000003164"/>
    </source>
</evidence>
<reference key="1">
    <citation type="journal article" date="1997" name="Yeast">
        <title>Sequencing of a 40.5 kb fragment located on the left arm of chromosome VII from Saccharomyces cerevisiae.</title>
        <authorList>
            <person name="Coglievina M."/>
            <person name="Klima R."/>
            <person name="Bertani I."/>
            <person name="Delneri D."/>
            <person name="Zaccaria P."/>
            <person name="Bruschi C.V."/>
        </authorList>
    </citation>
    <scope>NUCLEOTIDE SEQUENCE [GENOMIC DNA]</scope>
    <source>
        <strain>ATCC 96604 / S288c / FY1679</strain>
    </source>
</reference>
<reference key="2">
    <citation type="journal article" date="1997" name="Nature">
        <title>The nucleotide sequence of Saccharomyces cerevisiae chromosome VII.</title>
        <authorList>
            <person name="Tettelin H."/>
            <person name="Agostoni-Carbone M.L."/>
            <person name="Albermann K."/>
            <person name="Albers M."/>
            <person name="Arroyo J."/>
            <person name="Backes U."/>
            <person name="Barreiros T."/>
            <person name="Bertani I."/>
            <person name="Bjourson A.J."/>
            <person name="Brueckner M."/>
            <person name="Bruschi C.V."/>
            <person name="Carignani G."/>
            <person name="Castagnoli L."/>
            <person name="Cerdan E."/>
            <person name="Clemente M.L."/>
            <person name="Coblenz A."/>
            <person name="Coglievina M."/>
            <person name="Coissac E."/>
            <person name="Defoor E."/>
            <person name="Del Bino S."/>
            <person name="Delius H."/>
            <person name="Delneri D."/>
            <person name="de Wergifosse P."/>
            <person name="Dujon B."/>
            <person name="Durand P."/>
            <person name="Entian K.-D."/>
            <person name="Eraso P."/>
            <person name="Escribano V."/>
            <person name="Fabiani L."/>
            <person name="Fartmann B."/>
            <person name="Feroli F."/>
            <person name="Feuermann M."/>
            <person name="Frontali L."/>
            <person name="Garcia-Gonzalez M."/>
            <person name="Garcia-Saez M.I."/>
            <person name="Goffeau A."/>
            <person name="Guerreiro P."/>
            <person name="Hani J."/>
            <person name="Hansen M."/>
            <person name="Hebling U."/>
            <person name="Hernandez K."/>
            <person name="Heumann K."/>
            <person name="Hilger F."/>
            <person name="Hofmann B."/>
            <person name="Indge K.J."/>
            <person name="James C.M."/>
            <person name="Klima R."/>
            <person name="Koetter P."/>
            <person name="Kramer B."/>
            <person name="Kramer W."/>
            <person name="Lauquin G."/>
            <person name="Leuther H."/>
            <person name="Louis E.J."/>
            <person name="Maillier E."/>
            <person name="Marconi A."/>
            <person name="Martegani E."/>
            <person name="Mazon M.J."/>
            <person name="Mazzoni C."/>
            <person name="McReynolds A.D.K."/>
            <person name="Melchioretto P."/>
            <person name="Mewes H.-W."/>
            <person name="Minenkova O."/>
            <person name="Mueller-Auer S."/>
            <person name="Nawrocki A."/>
            <person name="Netter P."/>
            <person name="Neu R."/>
            <person name="Nombela C."/>
            <person name="Oliver S.G."/>
            <person name="Panzeri L."/>
            <person name="Paoluzi S."/>
            <person name="Plevani P."/>
            <person name="Portetelle D."/>
            <person name="Portillo F."/>
            <person name="Potier S."/>
            <person name="Purnelle B."/>
            <person name="Rieger M."/>
            <person name="Riles L."/>
            <person name="Rinaldi T."/>
            <person name="Robben J."/>
            <person name="Rodrigues-Pousada C."/>
            <person name="Rodriguez-Belmonte E."/>
            <person name="Rodriguez-Torres A.M."/>
            <person name="Rose M."/>
            <person name="Ruzzi M."/>
            <person name="Saliola M."/>
            <person name="Sanchez-Perez M."/>
            <person name="Schaefer B."/>
            <person name="Schaefer M."/>
            <person name="Scharfe M."/>
            <person name="Schmidheini T."/>
            <person name="Schreer A."/>
            <person name="Skala J."/>
            <person name="Souciet J.-L."/>
            <person name="Steensma H.Y."/>
            <person name="Talla E."/>
            <person name="Thierry A."/>
            <person name="Vandenbol M."/>
            <person name="van der Aart Q.J.M."/>
            <person name="Van Dyck L."/>
            <person name="Vanoni M."/>
            <person name="Verhasselt P."/>
            <person name="Voet M."/>
            <person name="Volckaert G."/>
            <person name="Wambutt R."/>
            <person name="Watson M.D."/>
            <person name="Weber N."/>
            <person name="Wedler E."/>
            <person name="Wedler H."/>
            <person name="Wipfli P."/>
            <person name="Wolf K."/>
            <person name="Wright L.F."/>
            <person name="Zaccaria P."/>
            <person name="Zimmermann M."/>
            <person name="Zollner A."/>
            <person name="Kleine K."/>
        </authorList>
    </citation>
    <scope>NUCLEOTIDE SEQUENCE [LARGE SCALE GENOMIC DNA]</scope>
    <source>
        <strain>ATCC 204508 / S288c</strain>
    </source>
</reference>
<reference key="3">
    <citation type="journal article" date="2014" name="G3 (Bethesda)">
        <title>The reference genome sequence of Saccharomyces cerevisiae: Then and now.</title>
        <authorList>
            <person name="Engel S.R."/>
            <person name="Dietrich F.S."/>
            <person name="Fisk D.G."/>
            <person name="Binkley G."/>
            <person name="Balakrishnan R."/>
            <person name="Costanzo M.C."/>
            <person name="Dwight S.S."/>
            <person name="Hitz B.C."/>
            <person name="Karra K."/>
            <person name="Nash R.S."/>
            <person name="Weng S."/>
            <person name="Wong E.D."/>
            <person name="Lloyd P."/>
            <person name="Skrzypek M.S."/>
            <person name="Miyasato S.R."/>
            <person name="Simison M."/>
            <person name="Cherry J.M."/>
        </authorList>
    </citation>
    <scope>GENOME REANNOTATION</scope>
    <source>
        <strain>ATCC 204508 / S288c</strain>
    </source>
</reference>
<reference key="4">
    <citation type="journal article" date="2007" name="Genome Res.">
        <title>Approaching a complete repository of sequence-verified protein-encoding clones for Saccharomyces cerevisiae.</title>
        <authorList>
            <person name="Hu Y."/>
            <person name="Rolfs A."/>
            <person name="Bhullar B."/>
            <person name="Murthy T.V.S."/>
            <person name="Zhu C."/>
            <person name="Berger M.F."/>
            <person name="Camargo A.A."/>
            <person name="Kelley F."/>
            <person name="McCarron S."/>
            <person name="Jepson D."/>
            <person name="Richardson A."/>
            <person name="Raphael J."/>
            <person name="Moreira D."/>
            <person name="Taycher E."/>
            <person name="Zuo D."/>
            <person name="Mohr S."/>
            <person name="Kane M.F."/>
            <person name="Williamson J."/>
            <person name="Simpson A.J.G."/>
            <person name="Bulyk M.L."/>
            <person name="Harlow E."/>
            <person name="Marsischky G."/>
            <person name="Kolodner R.D."/>
            <person name="LaBaer J."/>
        </authorList>
    </citation>
    <scope>NUCLEOTIDE SEQUENCE [GENOMIC DNA] OF 223-387</scope>
    <source>
        <strain>ATCC 204508 / S288c</strain>
    </source>
</reference>
<reference key="5">
    <citation type="journal article" date="2003" name="Nature">
        <title>Sequencing and comparison of yeast species to identify genes and regulatory elements.</title>
        <authorList>
            <person name="Kellis M."/>
            <person name="Patterson N."/>
            <person name="Endrizzi M."/>
            <person name="Birren B.W."/>
            <person name="Lander E.S."/>
        </authorList>
    </citation>
    <scope>IDENTIFICATION OF FRAMESHIFTS</scope>
</reference>
<reference key="6">
    <citation type="journal article" date="2007" name="Anal. Biochem.">
        <title>Enzymatic assay of D-serine using D-serine dehydratase from Saccharomyces cerevisiae.</title>
        <authorList>
            <person name="Ito T."/>
            <person name="Takahashi K."/>
            <person name="Naka T."/>
            <person name="Hemmi H."/>
            <person name="Yoshimura T."/>
        </authorList>
    </citation>
    <scope>FUNCTION</scope>
    <scope>CATALYTIC ACTIVITY</scope>
</reference>
<reference key="7">
    <citation type="journal article" date="2008" name="Biochem. J.">
        <title>A novel zinc-dependent D-serine dehydratase from Saccharomyces cerevisiae.</title>
        <authorList>
            <person name="Ito T."/>
            <person name="Hemmi H."/>
            <person name="Kataoka K."/>
            <person name="Mukai Y."/>
            <person name="Yoshimura T."/>
        </authorList>
    </citation>
    <scope>FUNCTION</scope>
    <scope>CATALYTIC ACTIVITY</scope>
    <scope>HOMODIMERIZATION</scope>
    <scope>COFACTOR</scope>
    <scope>ACTIVITY REGULATION</scope>
    <scope>BIOPHYSICOCHEMICAL PROPERTIES</scope>
</reference>